<feature type="chain" id="PRO_0000123890" description="Tyrosine aminotransferase">
    <location>
        <begin position="1"/>
        <end position="416"/>
    </location>
</feature>
<feature type="modified residue" description="N6-(pyridoxal phosphate)lysine">
    <location>
        <position position="253"/>
    </location>
</feature>
<feature type="sequence conflict" description="In Ref. 2; AA sequence." evidence="3" ref="2">
    <original>H</original>
    <variation>D</variation>
    <location>
        <position position="153"/>
    </location>
</feature>
<feature type="helix" evidence="5">
    <location>
        <begin position="10"/>
        <end position="13"/>
    </location>
</feature>
<feature type="helix" evidence="5">
    <location>
        <begin position="18"/>
        <end position="24"/>
    </location>
</feature>
<feature type="turn" evidence="5">
    <location>
        <begin position="43"/>
        <end position="46"/>
    </location>
</feature>
<feature type="helix" evidence="5">
    <location>
        <begin position="53"/>
        <end position="64"/>
    </location>
</feature>
<feature type="strand" evidence="5">
    <location>
        <begin position="68"/>
        <end position="70"/>
    </location>
</feature>
<feature type="helix" evidence="5">
    <location>
        <begin position="78"/>
        <end position="92"/>
    </location>
</feature>
<feature type="turn" evidence="5">
    <location>
        <begin position="96"/>
        <end position="98"/>
    </location>
</feature>
<feature type="helix" evidence="5">
    <location>
        <begin position="99"/>
        <end position="101"/>
    </location>
</feature>
<feature type="helix" evidence="5">
    <location>
        <begin position="104"/>
        <end position="106"/>
    </location>
</feature>
<feature type="strand" evidence="5">
    <location>
        <begin position="107"/>
        <end position="111"/>
    </location>
</feature>
<feature type="helix" evidence="5">
    <location>
        <begin position="112"/>
        <end position="124"/>
    </location>
</feature>
<feature type="strand" evidence="5">
    <location>
        <begin position="130"/>
        <end position="136"/>
    </location>
</feature>
<feature type="helix" evidence="5">
    <location>
        <begin position="140"/>
        <end position="147"/>
    </location>
</feature>
<feature type="strand" evidence="5">
    <location>
        <begin position="151"/>
        <end position="157"/>
    </location>
</feature>
<feature type="helix" evidence="5">
    <location>
        <begin position="159"/>
        <end position="161"/>
    </location>
</feature>
<feature type="helix" evidence="5">
    <location>
        <begin position="167"/>
        <end position="173"/>
    </location>
</feature>
<feature type="strand" evidence="5">
    <location>
        <begin position="178"/>
        <end position="186"/>
    </location>
</feature>
<feature type="turn" evidence="5">
    <location>
        <begin position="188"/>
        <end position="190"/>
    </location>
</feature>
<feature type="helix" evidence="5">
    <location>
        <begin position="196"/>
        <end position="209"/>
    </location>
</feature>
<feature type="strand" evidence="5">
    <location>
        <begin position="213"/>
        <end position="216"/>
    </location>
</feature>
<feature type="turn" evidence="5">
    <location>
        <begin position="218"/>
        <end position="221"/>
    </location>
</feature>
<feature type="strand" evidence="5">
    <location>
        <begin position="245"/>
        <end position="250"/>
    </location>
</feature>
<feature type="helix" evidence="5">
    <location>
        <begin position="258"/>
        <end position="260"/>
    </location>
</feature>
<feature type="strand" evidence="5">
    <location>
        <begin position="263"/>
        <end position="268"/>
    </location>
</feature>
<feature type="helix" evidence="5">
    <location>
        <begin position="275"/>
        <end position="288"/>
    </location>
</feature>
<feature type="helix" evidence="5">
    <location>
        <begin position="293"/>
        <end position="304"/>
    </location>
</feature>
<feature type="helix" evidence="5">
    <location>
        <begin position="308"/>
        <end position="329"/>
    </location>
</feature>
<feature type="strand" evidence="5">
    <location>
        <begin position="335"/>
        <end position="337"/>
    </location>
</feature>
<feature type="strand" evidence="5">
    <location>
        <begin position="345"/>
        <end position="350"/>
    </location>
</feature>
<feature type="helix" evidence="5">
    <location>
        <begin position="352"/>
        <end position="354"/>
    </location>
</feature>
<feature type="strand" evidence="5">
    <location>
        <begin position="355"/>
        <end position="357"/>
    </location>
</feature>
<feature type="helix" evidence="5">
    <location>
        <begin position="361"/>
        <end position="372"/>
    </location>
</feature>
<feature type="helix" evidence="5">
    <location>
        <begin position="379"/>
        <end position="382"/>
    </location>
</feature>
<feature type="strand" evidence="5">
    <location>
        <begin position="387"/>
        <end position="391"/>
    </location>
</feature>
<feature type="helix" evidence="5">
    <location>
        <begin position="396"/>
        <end position="413"/>
    </location>
</feature>
<organism>
    <name type="scientific">Trypanosoma cruzi</name>
    <dbReference type="NCBI Taxonomy" id="5693"/>
    <lineage>
        <taxon>Eukaryota</taxon>
        <taxon>Discoba</taxon>
        <taxon>Euglenozoa</taxon>
        <taxon>Kinetoplastea</taxon>
        <taxon>Metakinetoplastina</taxon>
        <taxon>Trypanosomatida</taxon>
        <taxon>Trypanosomatidae</taxon>
        <taxon>Trypanosoma</taxon>
        <taxon>Schizotrypanum</taxon>
    </lineage>
</organism>
<evidence type="ECO:0000250" key="1"/>
<evidence type="ECO:0000269" key="2">
    <source>
    </source>
</evidence>
<evidence type="ECO:0000305" key="3"/>
<evidence type="ECO:0000305" key="4">
    <source>
    </source>
</evidence>
<evidence type="ECO:0007829" key="5">
    <source>
        <dbReference type="PDB" id="1BW0"/>
    </source>
</evidence>
<reference key="1">
    <citation type="journal article" date="1993" name="Mol. Biochem. Parasitol.">
        <title>Isolation and characterization of a gene from Trypanosoma cruzi encoding a 46-kilodalton protein with homology to human and rat tyrosine aminotransferase.</title>
        <authorList>
            <person name="Bontempi E.J."/>
            <person name="Bua J."/>
            <person name="Aaslund L."/>
            <person name="Porcel B."/>
            <person name="Henriksson J."/>
            <person name="Pettersson U."/>
            <person name="Segura E.L."/>
            <person name="Oern A."/>
            <person name="Ruiz A.M."/>
        </authorList>
    </citation>
    <scope>NUCLEOTIDE SEQUENCE</scope>
</reference>
<reference key="2">
    <citation type="journal article" date="1993" name="Biochem. J.">
        <title>Purification and partial structural and kinetic characterization of tyrosine aminotransferase from epimastigotes of Trypanosoma cruzi.</title>
        <authorList>
            <person name="Montemartini M."/>
            <person name="Santome J.A."/>
            <person name="Cazzulo J.J."/>
            <person name="Nowicki C."/>
        </authorList>
    </citation>
    <scope>PROTEIN SEQUENCE OF 120-148; 153-167 AND 324-338</scope>
    <scope>CHARACTERIZATION</scope>
    <source>
        <strain>Tulahuen 0</strain>
    </source>
</reference>
<reference key="3">
    <citation type="journal article" date="1999" name="Protein Sci.">
        <title>Crystal structure of Trypanosoma cruzi tyrosine aminotransferase: substrate specificity is influenced by cofactor binding mode.</title>
        <authorList>
            <person name="Blankenfeldt W."/>
            <person name="Nowicki C."/>
            <person name="Montemartini-Kalisz M."/>
            <person name="Kalisz H.M."/>
            <person name="Hecht H.-J."/>
        </authorList>
    </citation>
    <scope>X-RAY CRYSTALLOGRAPHY (2.5 ANGSTROMS) IN COMPLEX WITH PYRIDOXAL PHOSPHATE</scope>
    <scope>SUBUNIT</scope>
    <scope>COFACTOR</scope>
</reference>
<proteinExistence type="evidence at protein level"/>
<dbReference type="EC" id="2.6.1.5"/>
<dbReference type="EMBL" id="L00673">
    <property type="protein sequence ID" value="AAA02975.1"/>
    <property type="molecule type" value="Unassigned_DNA"/>
</dbReference>
<dbReference type="PDB" id="1BW0">
    <property type="method" value="X-ray"/>
    <property type="resolution" value="2.50 A"/>
    <property type="chains" value="A/B=1-416"/>
</dbReference>
<dbReference type="PDBsum" id="1BW0"/>
<dbReference type="SMR" id="P33447"/>
<dbReference type="DrugBank" id="DB04083">
    <property type="generic name" value="N(6)-(pyridoxal phosphate)-L-lysine"/>
</dbReference>
<dbReference type="VEuPathDB" id="TriTrypDB:BCY84_22862"/>
<dbReference type="VEuPathDB" id="TriTrypDB:C3747_114g58"/>
<dbReference type="VEuPathDB" id="TriTrypDB:C4B63_101g1"/>
<dbReference type="VEuPathDB" id="TriTrypDB:C4B63_101g2"/>
<dbReference type="VEuPathDB" id="TriTrypDB:C4B63_26g354"/>
<dbReference type="VEuPathDB" id="TriTrypDB:C4B63_54g138"/>
<dbReference type="VEuPathDB" id="TriTrypDB:C4B63_81g64"/>
<dbReference type="VEuPathDB" id="TriTrypDB:C4B63_81g65"/>
<dbReference type="VEuPathDB" id="TriTrypDB:C4B63_81g66"/>
<dbReference type="VEuPathDB" id="TriTrypDB:C4B63_81g67"/>
<dbReference type="VEuPathDB" id="TriTrypDB:C4B63_81g68"/>
<dbReference type="VEuPathDB" id="TriTrypDB:ECC02_013086"/>
<dbReference type="VEuPathDB" id="TriTrypDB:Tc_MARK_1849"/>
<dbReference type="VEuPathDB" id="TriTrypDB:TcBrA4_0018030"/>
<dbReference type="VEuPathDB" id="TriTrypDB:TcCL_ESM10819"/>
<dbReference type="VEuPathDB" id="TriTrypDB:TcCLB.508535.50"/>
<dbReference type="VEuPathDB" id="TriTrypDB:TcCLB.510187.40"/>
<dbReference type="VEuPathDB" id="TriTrypDB:TcCLB.510565.11"/>
<dbReference type="VEuPathDB" id="TriTrypDB:TCDM_06595"/>
<dbReference type="VEuPathDB" id="TriTrypDB:TcG_12830"/>
<dbReference type="VEuPathDB" id="TriTrypDB:TCSYLVIO_005122"/>
<dbReference type="VEuPathDB" id="TriTrypDB:TcYC6_0085550"/>
<dbReference type="OrthoDB" id="1691396at2759"/>
<dbReference type="BRENDA" id="2.6.1.5">
    <property type="organism ID" value="6524"/>
</dbReference>
<dbReference type="SABIO-RK" id="P33447"/>
<dbReference type="UniPathway" id="UPA00139">
    <property type="reaction ID" value="UER00338"/>
</dbReference>
<dbReference type="EvolutionaryTrace" id="P33447"/>
<dbReference type="GO" id="GO:0005739">
    <property type="term" value="C:mitochondrion"/>
    <property type="evidence" value="ECO:0007669"/>
    <property type="project" value="UniProtKB-SubCell"/>
</dbReference>
<dbReference type="GO" id="GO:0004838">
    <property type="term" value="F:L-tyrosine-2-oxoglutarate transaminase activity"/>
    <property type="evidence" value="ECO:0007669"/>
    <property type="project" value="InterPro"/>
</dbReference>
<dbReference type="GO" id="GO:0030170">
    <property type="term" value="F:pyridoxal phosphate binding"/>
    <property type="evidence" value="ECO:0007669"/>
    <property type="project" value="InterPro"/>
</dbReference>
<dbReference type="GO" id="GO:0009058">
    <property type="term" value="P:biosynthetic process"/>
    <property type="evidence" value="ECO:0007669"/>
    <property type="project" value="InterPro"/>
</dbReference>
<dbReference type="GO" id="GO:0006559">
    <property type="term" value="P:L-phenylalanine catabolic process"/>
    <property type="evidence" value="ECO:0007669"/>
    <property type="project" value="UniProtKB-UniPathway"/>
</dbReference>
<dbReference type="GO" id="GO:0006572">
    <property type="term" value="P:tyrosine catabolic process"/>
    <property type="evidence" value="ECO:0007669"/>
    <property type="project" value="UniProtKB-KW"/>
</dbReference>
<dbReference type="CDD" id="cd00609">
    <property type="entry name" value="AAT_like"/>
    <property type="match status" value="1"/>
</dbReference>
<dbReference type="Gene3D" id="3.90.1150.10">
    <property type="entry name" value="Aspartate Aminotransferase, domain 1"/>
    <property type="match status" value="1"/>
</dbReference>
<dbReference type="Gene3D" id="3.40.640.10">
    <property type="entry name" value="Type I PLP-dependent aspartate aminotransferase-like (Major domain)"/>
    <property type="match status" value="1"/>
</dbReference>
<dbReference type="InterPro" id="IPR004839">
    <property type="entry name" value="Aminotransferase_I/II_large"/>
</dbReference>
<dbReference type="InterPro" id="IPR004838">
    <property type="entry name" value="NHTrfase_class1_PyrdxlP-BS"/>
</dbReference>
<dbReference type="InterPro" id="IPR015424">
    <property type="entry name" value="PyrdxlP-dep_Trfase"/>
</dbReference>
<dbReference type="InterPro" id="IPR015421">
    <property type="entry name" value="PyrdxlP-dep_Trfase_major"/>
</dbReference>
<dbReference type="InterPro" id="IPR015422">
    <property type="entry name" value="PyrdxlP-dep_Trfase_small"/>
</dbReference>
<dbReference type="InterPro" id="IPR005958">
    <property type="entry name" value="TyrNic_aminoTrfase"/>
</dbReference>
<dbReference type="InterPro" id="IPR005957">
    <property type="entry name" value="Tyrosine_aminoTrfase"/>
</dbReference>
<dbReference type="NCBIfam" id="TIGR01264">
    <property type="entry name" value="tyr_amTase_E"/>
    <property type="match status" value="1"/>
</dbReference>
<dbReference type="NCBIfam" id="TIGR01265">
    <property type="entry name" value="tyr_nico_aTase"/>
    <property type="match status" value="1"/>
</dbReference>
<dbReference type="PANTHER" id="PTHR45744">
    <property type="entry name" value="TYROSINE AMINOTRANSFERASE"/>
    <property type="match status" value="1"/>
</dbReference>
<dbReference type="PANTHER" id="PTHR45744:SF2">
    <property type="entry name" value="TYROSINE AMINOTRANSFERASE"/>
    <property type="match status" value="1"/>
</dbReference>
<dbReference type="Pfam" id="PF00155">
    <property type="entry name" value="Aminotran_1_2"/>
    <property type="match status" value="1"/>
</dbReference>
<dbReference type="PIRSF" id="PIRSF000517">
    <property type="entry name" value="Tyr_transaminase"/>
    <property type="match status" value="1"/>
</dbReference>
<dbReference type="SUPFAM" id="SSF53383">
    <property type="entry name" value="PLP-dependent transferases"/>
    <property type="match status" value="1"/>
</dbReference>
<dbReference type="PROSITE" id="PS00105">
    <property type="entry name" value="AA_TRANSFER_CLASS_1"/>
    <property type="match status" value="1"/>
</dbReference>
<protein>
    <recommendedName>
        <fullName>Tyrosine aminotransferase</fullName>
        <shortName>TAT</shortName>
        <ecNumber>2.6.1.5</ecNumber>
    </recommendedName>
    <alternativeName>
        <fullName>L-tyrosine:2-oxoglutarate aminotransferase</fullName>
    </alternativeName>
</protein>
<comment type="function">
    <text evidence="1">Transaminase involved in tyrosine breakdown. Converts tyrosine to p-hydroxyphenylpyruvate (By similarity).</text>
</comment>
<comment type="catalytic activity">
    <reaction>
        <text>L-tyrosine + 2-oxoglutarate = 3-(4-hydroxyphenyl)pyruvate + L-glutamate</text>
        <dbReference type="Rhea" id="RHEA:15093"/>
        <dbReference type="ChEBI" id="CHEBI:16810"/>
        <dbReference type="ChEBI" id="CHEBI:29985"/>
        <dbReference type="ChEBI" id="CHEBI:36242"/>
        <dbReference type="ChEBI" id="CHEBI:58315"/>
        <dbReference type="EC" id="2.6.1.5"/>
    </reaction>
</comment>
<comment type="cofactor">
    <cofactor evidence="2">
        <name>pyridoxal 5'-phosphate</name>
        <dbReference type="ChEBI" id="CHEBI:597326"/>
    </cofactor>
</comment>
<comment type="pathway">
    <text>Amino-acid degradation; L-phenylalanine degradation; acetoacetate and fumarate from L-phenylalanine: step 2/6.</text>
</comment>
<comment type="subunit">
    <text evidence="2">Homodimer.</text>
</comment>
<comment type="subcellular location">
    <subcellularLocation>
        <location>Cytoplasm</location>
    </subcellularLocation>
    <subcellularLocation>
        <location>Mitochondrion</location>
    </subcellularLocation>
    <text>Mainly cytoplasmic. Present to a small extent in the mitochondrial fraction.</text>
</comment>
<comment type="PTM">
    <text>The N-terminus is blocked.</text>
</comment>
<comment type="similarity">
    <text evidence="3">Belongs to the class-I pyridoxal-phosphate-dependent aminotransferase family.</text>
</comment>
<comment type="caution">
    <text evidence="4">Was originally thought to have three internal disulfide bonds.</text>
</comment>
<keyword id="KW-0002">3D-structure</keyword>
<keyword id="KW-0032">Aminotransferase</keyword>
<keyword id="KW-0963">Cytoplasm</keyword>
<keyword id="KW-0903">Direct protein sequencing</keyword>
<keyword id="KW-0496">Mitochondrion</keyword>
<keyword id="KW-0585">Phenylalanine catabolism</keyword>
<keyword id="KW-0663">Pyridoxal phosphate</keyword>
<keyword id="KW-0808">Transferase</keyword>
<keyword id="KW-0828">Tyrosine catabolism</keyword>
<sequence length="416" mass="46167">MSSWDVSMSNHAGLVFNPIRTVSDNAKPSPSPKPIIKLSVGDPTLDKNLLTSAAQIKKLKEAIDSQECNGYFPTVGSPEAREAVATWWRNSFVHKEELKSTIVKDNVVLCSGGSHGILMAITAICDAGDYALVPQPGFPHYETVCKAYGIGMHFYNCRPENDWEADLDEIRRLKDDKTKLLIVTNPSNPCGSNFSRKHVEDIVRLAEELRLPLFSDEIYAGMVFKGKDPNATFTSVADFETTVPRVILGGTAKNLVVPGWRLGWLLYVDPHGNGPSFLEGLKRVGMLVCGPCTVVQAALGEALLNTPQEHLDQIVAKIEESAMYLYNHIGECIGLAPTMPRGAMYLMSRIDLEKYRDIKTDVEFFEKLLEEENVQVLPGTIFHAPGFTRLTTTRPVEVYREAVERIKAFCQRHAAV</sequence>
<accession>P33447</accession>
<name>ATTY_TRYCR</name>